<organism>
    <name type="scientific">Sodalis glossinidius (strain morsitans)</name>
    <dbReference type="NCBI Taxonomy" id="343509"/>
    <lineage>
        <taxon>Bacteria</taxon>
        <taxon>Pseudomonadati</taxon>
        <taxon>Pseudomonadota</taxon>
        <taxon>Gammaproteobacteria</taxon>
        <taxon>Enterobacterales</taxon>
        <taxon>Bruguierivoracaceae</taxon>
        <taxon>Sodalis</taxon>
    </lineage>
</organism>
<feature type="chain" id="PRO_1000019509" description="Oxygen-dependent coproporphyrinogen-III oxidase">
    <location>
        <begin position="1"/>
        <end position="304"/>
    </location>
</feature>
<feature type="region of interest" description="Important for dimerization" evidence="1">
    <location>
        <begin position="242"/>
        <end position="277"/>
    </location>
</feature>
<feature type="active site" description="Proton donor" evidence="1">
    <location>
        <position position="108"/>
    </location>
</feature>
<feature type="binding site" evidence="1">
    <location>
        <position position="94"/>
    </location>
    <ligand>
        <name>substrate</name>
    </ligand>
</feature>
<feature type="binding site" evidence="1">
    <location>
        <position position="98"/>
    </location>
    <ligand>
        <name>a divalent metal cation</name>
        <dbReference type="ChEBI" id="CHEBI:60240"/>
    </ligand>
</feature>
<feature type="binding site" evidence="1">
    <location>
        <position position="108"/>
    </location>
    <ligand>
        <name>a divalent metal cation</name>
        <dbReference type="ChEBI" id="CHEBI:60240"/>
    </ligand>
</feature>
<feature type="binding site" evidence="1">
    <location>
        <begin position="110"/>
        <end position="112"/>
    </location>
    <ligand>
        <name>substrate</name>
    </ligand>
</feature>
<feature type="binding site" evidence="1">
    <location>
        <position position="147"/>
    </location>
    <ligand>
        <name>a divalent metal cation</name>
        <dbReference type="ChEBI" id="CHEBI:60240"/>
    </ligand>
</feature>
<feature type="binding site" evidence="1">
    <location>
        <position position="177"/>
    </location>
    <ligand>
        <name>a divalent metal cation</name>
        <dbReference type="ChEBI" id="CHEBI:60240"/>
    </ligand>
</feature>
<feature type="binding site" evidence="1">
    <location>
        <begin position="260"/>
        <end position="262"/>
    </location>
    <ligand>
        <name>substrate</name>
    </ligand>
</feature>
<feature type="site" description="Important for dimerization" evidence="1">
    <location>
        <position position="177"/>
    </location>
</feature>
<accession>Q2NS88</accession>
<keyword id="KW-0963">Cytoplasm</keyword>
<keyword id="KW-0350">Heme biosynthesis</keyword>
<keyword id="KW-0479">Metal-binding</keyword>
<keyword id="KW-0560">Oxidoreductase</keyword>
<keyword id="KW-0627">Porphyrin biosynthesis</keyword>
<proteinExistence type="inferred from homology"/>
<comment type="function">
    <text evidence="1">Involved in the heme biosynthesis. Catalyzes the aerobic oxidative decarboxylation of propionate groups of rings A and B of coproporphyrinogen-III to yield the vinyl groups in protoporphyrinogen-IX.</text>
</comment>
<comment type="catalytic activity">
    <reaction evidence="1">
        <text>coproporphyrinogen III + O2 + 2 H(+) = protoporphyrinogen IX + 2 CO2 + 2 H2O</text>
        <dbReference type="Rhea" id="RHEA:18257"/>
        <dbReference type="ChEBI" id="CHEBI:15377"/>
        <dbReference type="ChEBI" id="CHEBI:15378"/>
        <dbReference type="ChEBI" id="CHEBI:15379"/>
        <dbReference type="ChEBI" id="CHEBI:16526"/>
        <dbReference type="ChEBI" id="CHEBI:57307"/>
        <dbReference type="ChEBI" id="CHEBI:57309"/>
        <dbReference type="EC" id="1.3.3.3"/>
    </reaction>
</comment>
<comment type="cofactor">
    <cofactor evidence="1">
        <name>a divalent metal cation</name>
        <dbReference type="ChEBI" id="CHEBI:60240"/>
    </cofactor>
</comment>
<comment type="pathway">
    <text evidence="1">Porphyrin-containing compound metabolism; protoporphyrin-IX biosynthesis; protoporphyrinogen-IX from coproporphyrinogen-III (O2 route): step 1/1.</text>
</comment>
<comment type="subunit">
    <text evidence="1">Homodimer.</text>
</comment>
<comment type="subcellular location">
    <subcellularLocation>
        <location evidence="1">Cytoplasm</location>
    </subcellularLocation>
</comment>
<comment type="similarity">
    <text evidence="1">Belongs to the aerobic coproporphyrinogen-III oxidase family.</text>
</comment>
<gene>
    <name evidence="1" type="primary">hemF</name>
    <name type="ordered locus">SG1712</name>
</gene>
<protein>
    <recommendedName>
        <fullName evidence="1">Oxygen-dependent coproporphyrinogen-III oxidase</fullName>
        <shortName evidence="1">CPO</shortName>
        <shortName evidence="1">Coprogen oxidase</shortName>
        <shortName evidence="1">Coproporphyrinogenase</shortName>
        <ecNumber evidence="1">1.3.3.3</ecNumber>
    </recommendedName>
</protein>
<sequence>MDQPDIEHINAYLLALQETICAALTAADGGAVFHEDLWQRDEGGGGRTRVLRQGRVFEQAGVNFSRVYGGALPASATAHRPELAGRSYQAMGVSLVVHPENPYIPTSHANVRFFIAEKPGAEPIWWFGGGFDLTPFYGFHEDAVHWHRTAQALCQPFGDTVYPRYKRWCDDYFFLKHRNEARGIGGLFFDDLSAPNFNEAFAFCRAVSQGYLDAYLPIVERRKSHPWGERERQFQLYRRGRYVEFNLVWDRGTLFGLQSGGRTESVLMSMPPLARWQYHYDPAHDSPEAALYRDFLPARDWLKE</sequence>
<dbReference type="EC" id="1.3.3.3" evidence="1"/>
<dbReference type="EMBL" id="AP008232">
    <property type="protein sequence ID" value="BAE74987.1"/>
    <property type="molecule type" value="Genomic_DNA"/>
</dbReference>
<dbReference type="RefSeq" id="WP_011411536.1">
    <property type="nucleotide sequence ID" value="NC_007712.1"/>
</dbReference>
<dbReference type="SMR" id="Q2NS88"/>
<dbReference type="STRING" id="343509.SG1712"/>
<dbReference type="KEGG" id="sgl:SG1712"/>
<dbReference type="eggNOG" id="COG0408">
    <property type="taxonomic scope" value="Bacteria"/>
</dbReference>
<dbReference type="HOGENOM" id="CLU_026169_0_1_6"/>
<dbReference type="OrthoDB" id="9777553at2"/>
<dbReference type="BioCyc" id="SGLO343509:SGP1_RS15570-MONOMER"/>
<dbReference type="UniPathway" id="UPA00251">
    <property type="reaction ID" value="UER00322"/>
</dbReference>
<dbReference type="Proteomes" id="UP000001932">
    <property type="component" value="Chromosome"/>
</dbReference>
<dbReference type="GO" id="GO:0005737">
    <property type="term" value="C:cytoplasm"/>
    <property type="evidence" value="ECO:0007669"/>
    <property type="project" value="UniProtKB-SubCell"/>
</dbReference>
<dbReference type="GO" id="GO:0004109">
    <property type="term" value="F:coproporphyrinogen oxidase activity"/>
    <property type="evidence" value="ECO:0007669"/>
    <property type="project" value="UniProtKB-UniRule"/>
</dbReference>
<dbReference type="GO" id="GO:0046872">
    <property type="term" value="F:metal ion binding"/>
    <property type="evidence" value="ECO:0007669"/>
    <property type="project" value="UniProtKB-KW"/>
</dbReference>
<dbReference type="GO" id="GO:0042803">
    <property type="term" value="F:protein homodimerization activity"/>
    <property type="evidence" value="ECO:0000250"/>
    <property type="project" value="UniProtKB"/>
</dbReference>
<dbReference type="GO" id="GO:0006782">
    <property type="term" value="P:protoporphyrinogen IX biosynthetic process"/>
    <property type="evidence" value="ECO:0007669"/>
    <property type="project" value="UniProtKB-UniRule"/>
</dbReference>
<dbReference type="FunFam" id="3.40.1500.10:FF:000001">
    <property type="entry name" value="Oxygen-dependent coproporphyrinogen-III oxidase"/>
    <property type="match status" value="1"/>
</dbReference>
<dbReference type="Gene3D" id="3.40.1500.10">
    <property type="entry name" value="Coproporphyrinogen III oxidase, aerobic"/>
    <property type="match status" value="1"/>
</dbReference>
<dbReference type="HAMAP" id="MF_00333">
    <property type="entry name" value="Coprogen_oxidas"/>
    <property type="match status" value="1"/>
</dbReference>
<dbReference type="InterPro" id="IPR001260">
    <property type="entry name" value="Coprogen_oxidase_aer"/>
</dbReference>
<dbReference type="InterPro" id="IPR036406">
    <property type="entry name" value="Coprogen_oxidase_aer_sf"/>
</dbReference>
<dbReference type="InterPro" id="IPR018375">
    <property type="entry name" value="Coprogen_oxidase_CS"/>
</dbReference>
<dbReference type="NCBIfam" id="NF003727">
    <property type="entry name" value="PRK05330.1"/>
    <property type="match status" value="1"/>
</dbReference>
<dbReference type="PANTHER" id="PTHR10755">
    <property type="entry name" value="COPROPORPHYRINOGEN III OXIDASE, MITOCHONDRIAL"/>
    <property type="match status" value="1"/>
</dbReference>
<dbReference type="PANTHER" id="PTHR10755:SF0">
    <property type="entry name" value="OXYGEN-DEPENDENT COPROPORPHYRINOGEN-III OXIDASE, MITOCHONDRIAL"/>
    <property type="match status" value="1"/>
</dbReference>
<dbReference type="Pfam" id="PF01218">
    <property type="entry name" value="Coprogen_oxidas"/>
    <property type="match status" value="1"/>
</dbReference>
<dbReference type="PIRSF" id="PIRSF000166">
    <property type="entry name" value="Coproporphyri_ox"/>
    <property type="match status" value="1"/>
</dbReference>
<dbReference type="PRINTS" id="PR00073">
    <property type="entry name" value="COPRGNOXDASE"/>
</dbReference>
<dbReference type="SUPFAM" id="SSF102886">
    <property type="entry name" value="Coproporphyrinogen III oxidase"/>
    <property type="match status" value="1"/>
</dbReference>
<dbReference type="PROSITE" id="PS01021">
    <property type="entry name" value="COPROGEN_OXIDASE"/>
    <property type="match status" value="1"/>
</dbReference>
<evidence type="ECO:0000255" key="1">
    <source>
        <dbReference type="HAMAP-Rule" id="MF_00333"/>
    </source>
</evidence>
<reference key="1">
    <citation type="journal article" date="2006" name="Genome Res.">
        <title>Massive genome erosion and functional adaptations provide insights into the symbiotic lifestyle of Sodalis glossinidius in the tsetse host.</title>
        <authorList>
            <person name="Toh H."/>
            <person name="Weiss B.L."/>
            <person name="Perkin S.A.H."/>
            <person name="Yamashita A."/>
            <person name="Oshima K."/>
            <person name="Hattori M."/>
            <person name="Aksoy S."/>
        </authorList>
    </citation>
    <scope>NUCLEOTIDE SEQUENCE [LARGE SCALE GENOMIC DNA]</scope>
    <source>
        <strain>morsitans</strain>
    </source>
</reference>
<name>HEM6_SODGM</name>